<evidence type="ECO:0000250" key="1"/>
<evidence type="ECO:0000255" key="2"/>
<evidence type="ECO:0000255" key="3">
    <source>
        <dbReference type="PROSITE-ProRule" id="PRU00798"/>
    </source>
</evidence>
<evidence type="ECO:0000305" key="4"/>
<sequence length="70" mass="7621">MKVYCLLLVLLVGLVSQAQGQLDKKCQTMCTMEYLPVCGSDGTTYPNKCTLTSTACVNQMDITVLHNGEC</sequence>
<accession>P0DKT4</accession>
<keyword id="KW-1015">Disulfide bond</keyword>
<keyword id="KW-0872">Ion channel impairing toxin</keyword>
<keyword id="KW-0528">Neurotoxin</keyword>
<keyword id="KW-0646">Protease inhibitor</keyword>
<keyword id="KW-0964">Secreted</keyword>
<keyword id="KW-0722">Serine protease inhibitor</keyword>
<keyword id="KW-0732">Signal</keyword>
<keyword id="KW-0800">Toxin</keyword>
<feature type="signal peptide" evidence="2">
    <location>
        <begin position="1"/>
        <end position="20"/>
    </location>
</feature>
<feature type="chain" id="PRO_0000420718" description="Turripeptide Ici9.2">
    <location>
        <begin position="21"/>
        <end position="70"/>
    </location>
</feature>
<feature type="domain" description="Kazal-like" evidence="3">
    <location>
        <begin position="21"/>
        <end position="70"/>
    </location>
</feature>
<feature type="site" description="Reactive bond" evidence="3">
    <location>
        <begin position="32"/>
        <end position="33"/>
    </location>
</feature>
<feature type="disulfide bond" evidence="3">
    <location>
        <begin position="26"/>
        <end position="56"/>
    </location>
</feature>
<feature type="disulfide bond" evidence="3">
    <location>
        <begin position="30"/>
        <end position="49"/>
    </location>
</feature>
<feature type="disulfide bond" evidence="3">
    <location>
        <begin position="38"/>
        <end position="70"/>
    </location>
</feature>
<proteinExistence type="evidence at transcript level"/>
<name>TU92_IOTCI</name>
<protein>
    <recommendedName>
        <fullName>Turripeptide Ici9.2</fullName>
    </recommendedName>
</protein>
<organism>
    <name type="scientific">Iotyrris cingulifera</name>
    <name type="common">Sea snail</name>
    <name type="synonym">Pleurotoma cingulifera</name>
    <dbReference type="NCBI Taxonomy" id="553733"/>
    <lineage>
        <taxon>Eukaryota</taxon>
        <taxon>Metazoa</taxon>
        <taxon>Spiralia</taxon>
        <taxon>Lophotrochozoa</taxon>
        <taxon>Mollusca</taxon>
        <taxon>Gastropoda</taxon>
        <taxon>Caenogastropoda</taxon>
        <taxon>Neogastropoda</taxon>
        <taxon>Conoidea</taxon>
        <taxon>Turridae</taxon>
        <taxon>Iotyrris</taxon>
    </lineage>
</organism>
<comment type="function">
    <text evidence="1">Acts as a neurotoxin by inhibiting an ion channel (By similarity). May also act as a serine protease inhibitor, since it possess the kazal serine protease inhibitor signature.</text>
</comment>
<comment type="subcellular location">
    <subcellularLocation>
        <location evidence="1">Secreted</location>
    </subcellularLocation>
</comment>
<comment type="tissue specificity">
    <text>Expressed by the venom duct.</text>
</comment>
<comment type="domain">
    <text>The cysteine framework is IX (C-C-C-C-C-C).</text>
</comment>
<comment type="similarity">
    <text evidence="4">Belongs to the conopeptide P-like superfamily.</text>
</comment>
<dbReference type="SMR" id="P0DKT4"/>
<dbReference type="GO" id="GO:0005576">
    <property type="term" value="C:extracellular region"/>
    <property type="evidence" value="ECO:0007669"/>
    <property type="project" value="UniProtKB-SubCell"/>
</dbReference>
<dbReference type="GO" id="GO:0099106">
    <property type="term" value="F:ion channel regulator activity"/>
    <property type="evidence" value="ECO:0007669"/>
    <property type="project" value="UniProtKB-KW"/>
</dbReference>
<dbReference type="GO" id="GO:0004867">
    <property type="term" value="F:serine-type endopeptidase inhibitor activity"/>
    <property type="evidence" value="ECO:0007669"/>
    <property type="project" value="UniProtKB-KW"/>
</dbReference>
<dbReference type="GO" id="GO:0090729">
    <property type="term" value="F:toxin activity"/>
    <property type="evidence" value="ECO:0007669"/>
    <property type="project" value="UniProtKB-KW"/>
</dbReference>
<dbReference type="GO" id="GO:0030154">
    <property type="term" value="P:cell differentiation"/>
    <property type="evidence" value="ECO:0007669"/>
    <property type="project" value="TreeGrafter"/>
</dbReference>
<dbReference type="CDD" id="cd00104">
    <property type="entry name" value="KAZAL_FS"/>
    <property type="match status" value="1"/>
</dbReference>
<dbReference type="Gene3D" id="3.30.60.30">
    <property type="match status" value="1"/>
</dbReference>
<dbReference type="InterPro" id="IPR002350">
    <property type="entry name" value="Kazal_dom"/>
</dbReference>
<dbReference type="InterPro" id="IPR036058">
    <property type="entry name" value="Kazal_dom_sf"/>
</dbReference>
<dbReference type="InterPro" id="IPR001239">
    <property type="entry name" value="Prot_inh_Kazal-m"/>
</dbReference>
<dbReference type="InterPro" id="IPR050653">
    <property type="entry name" value="Prot_Inhib_GrowthFact_Antg"/>
</dbReference>
<dbReference type="PANTHER" id="PTHR10913:SF45">
    <property type="entry name" value="FOLLISTATIN, ISOFORM A-RELATED"/>
    <property type="match status" value="1"/>
</dbReference>
<dbReference type="PANTHER" id="PTHR10913">
    <property type="entry name" value="FOLLISTATIN-RELATED"/>
    <property type="match status" value="1"/>
</dbReference>
<dbReference type="Pfam" id="PF00050">
    <property type="entry name" value="Kazal_1"/>
    <property type="match status" value="1"/>
</dbReference>
<dbReference type="PRINTS" id="PR00290">
    <property type="entry name" value="KAZALINHBTR"/>
</dbReference>
<dbReference type="SMART" id="SM00280">
    <property type="entry name" value="KAZAL"/>
    <property type="match status" value="1"/>
</dbReference>
<dbReference type="SUPFAM" id="SSF100895">
    <property type="entry name" value="Kazal-type serine protease inhibitors"/>
    <property type="match status" value="1"/>
</dbReference>
<dbReference type="PROSITE" id="PS51465">
    <property type="entry name" value="KAZAL_2"/>
    <property type="match status" value="1"/>
</dbReference>
<reference key="1">
    <citation type="journal article" date="2012" name="Ann. N. Y. Acad. Sci.">
        <title>Adaptive radiation of venomous marine snail lineages and the accelerated evolution of venom peptide genes.</title>
        <authorList>
            <person name="Olivera B.M."/>
            <person name="Watkins M."/>
            <person name="Bandyopadhyay P."/>
            <person name="Imperial J.S."/>
            <person name="de la Cotera E.P."/>
            <person name="Aguilar M.B."/>
            <person name="Vera E.L."/>
            <person name="Concepcion G.P."/>
            <person name="Lluisma A."/>
        </authorList>
    </citation>
    <scope>NUCLEOTIDE SEQUENCE</scope>
</reference>